<feature type="chain" id="PRO_1000132593" description="Adenosylcobinamide-GDP ribazoletransferase">
    <location>
        <begin position="1"/>
        <end position="244"/>
    </location>
</feature>
<feature type="transmembrane region" description="Helical" evidence="1">
    <location>
        <begin position="31"/>
        <end position="51"/>
    </location>
</feature>
<feature type="transmembrane region" description="Helical" evidence="1">
    <location>
        <begin position="55"/>
        <end position="75"/>
    </location>
</feature>
<feature type="transmembrane region" description="Helical" evidence="1">
    <location>
        <begin position="109"/>
        <end position="129"/>
    </location>
</feature>
<feature type="transmembrane region" description="Helical" evidence="1">
    <location>
        <begin position="133"/>
        <end position="153"/>
    </location>
</feature>
<feature type="transmembrane region" description="Helical" evidence="1">
    <location>
        <begin position="188"/>
        <end position="208"/>
    </location>
</feature>
<protein>
    <recommendedName>
        <fullName evidence="1">Adenosylcobinamide-GDP ribazoletransferase</fullName>
        <ecNumber evidence="1">2.7.8.26</ecNumber>
    </recommendedName>
    <alternativeName>
        <fullName evidence="1">Cobalamin synthase</fullName>
    </alternativeName>
    <alternativeName>
        <fullName evidence="1">Cobalamin-5'-phosphate synthase</fullName>
    </alternativeName>
</protein>
<accession>B1J1P0</accession>
<sequence>MLPFWIALQFLSSLPVRLSGMPEPREMGRSLLCYPLVGLLFGLLLWLASHLLQGAPAPLHAALLLTLWVLLSGALHLDGLADSADAWLGGFGDRERTLKIMKDPRSGPIAVVTLVLVLLLKFCALWVLVERGAGALLVLAPVVGRAAMLGLFLGTPYVRPGGLGQALAEHLPRQTAGWVLLGSLLLCLLLGGWSAIWPMALALGVFLWLRRLMCQRLGGTTGDTAGAMLELLELTVVLGLALAT</sequence>
<comment type="function">
    <text evidence="1">Joins adenosylcobinamide-GDP and alpha-ribazole to generate adenosylcobalamin (Ado-cobalamin). Also synthesizes adenosylcobalamin 5'-phosphate from adenosylcobinamide-GDP and alpha-ribazole 5'-phosphate.</text>
</comment>
<comment type="catalytic activity">
    <reaction evidence="1">
        <text>alpha-ribazole + adenosylcob(III)inamide-GDP = adenosylcob(III)alamin + GMP + H(+)</text>
        <dbReference type="Rhea" id="RHEA:16049"/>
        <dbReference type="ChEBI" id="CHEBI:10329"/>
        <dbReference type="ChEBI" id="CHEBI:15378"/>
        <dbReference type="ChEBI" id="CHEBI:18408"/>
        <dbReference type="ChEBI" id="CHEBI:58115"/>
        <dbReference type="ChEBI" id="CHEBI:60487"/>
        <dbReference type="EC" id="2.7.8.26"/>
    </reaction>
</comment>
<comment type="catalytic activity">
    <reaction evidence="1">
        <text>alpha-ribazole 5'-phosphate + adenosylcob(III)inamide-GDP = adenosylcob(III)alamin 5'-phosphate + GMP + H(+)</text>
        <dbReference type="Rhea" id="RHEA:23560"/>
        <dbReference type="ChEBI" id="CHEBI:15378"/>
        <dbReference type="ChEBI" id="CHEBI:57918"/>
        <dbReference type="ChEBI" id="CHEBI:58115"/>
        <dbReference type="ChEBI" id="CHEBI:60487"/>
        <dbReference type="ChEBI" id="CHEBI:60493"/>
        <dbReference type="EC" id="2.7.8.26"/>
    </reaction>
</comment>
<comment type="cofactor">
    <cofactor evidence="1">
        <name>Mg(2+)</name>
        <dbReference type="ChEBI" id="CHEBI:18420"/>
    </cofactor>
</comment>
<comment type="pathway">
    <text evidence="1">Cofactor biosynthesis; adenosylcobalamin biosynthesis; adenosylcobalamin from cob(II)yrinate a,c-diamide: step 7/7.</text>
</comment>
<comment type="subcellular location">
    <subcellularLocation>
        <location evidence="1">Cell inner membrane</location>
        <topology evidence="1">Multi-pass membrane protein</topology>
    </subcellularLocation>
</comment>
<comment type="similarity">
    <text evidence="1">Belongs to the CobS family.</text>
</comment>
<reference key="1">
    <citation type="submission" date="2008-02" db="EMBL/GenBank/DDBJ databases">
        <title>Complete sequence of Pseudomonas putida W619.</title>
        <authorList>
            <person name="Copeland A."/>
            <person name="Lucas S."/>
            <person name="Lapidus A."/>
            <person name="Barry K."/>
            <person name="Detter J.C."/>
            <person name="Glavina del Rio T."/>
            <person name="Dalin E."/>
            <person name="Tice H."/>
            <person name="Pitluck S."/>
            <person name="Chain P."/>
            <person name="Malfatti S."/>
            <person name="Shin M."/>
            <person name="Vergez L."/>
            <person name="Schmutz J."/>
            <person name="Larimer F."/>
            <person name="Land M."/>
            <person name="Hauser L."/>
            <person name="Kyrpides N."/>
            <person name="Kim E."/>
            <person name="Taghavi S."/>
            <person name="Vangronsveld D."/>
            <person name="van der Lelie D."/>
            <person name="Richardson P."/>
        </authorList>
    </citation>
    <scope>NUCLEOTIDE SEQUENCE [LARGE SCALE GENOMIC DNA]</scope>
    <source>
        <strain>W619</strain>
    </source>
</reference>
<gene>
    <name evidence="1" type="primary">cobS</name>
    <name type="ordered locus">PputW619_1240</name>
</gene>
<name>COBS_PSEPW</name>
<proteinExistence type="inferred from homology"/>
<keyword id="KW-0997">Cell inner membrane</keyword>
<keyword id="KW-1003">Cell membrane</keyword>
<keyword id="KW-0169">Cobalamin biosynthesis</keyword>
<keyword id="KW-0460">Magnesium</keyword>
<keyword id="KW-0472">Membrane</keyword>
<keyword id="KW-0808">Transferase</keyword>
<keyword id="KW-0812">Transmembrane</keyword>
<keyword id="KW-1133">Transmembrane helix</keyword>
<organism>
    <name type="scientific">Pseudomonas putida (strain W619)</name>
    <dbReference type="NCBI Taxonomy" id="390235"/>
    <lineage>
        <taxon>Bacteria</taxon>
        <taxon>Pseudomonadati</taxon>
        <taxon>Pseudomonadota</taxon>
        <taxon>Gammaproteobacteria</taxon>
        <taxon>Pseudomonadales</taxon>
        <taxon>Pseudomonadaceae</taxon>
        <taxon>Pseudomonas</taxon>
    </lineage>
</organism>
<evidence type="ECO:0000255" key="1">
    <source>
        <dbReference type="HAMAP-Rule" id="MF_00719"/>
    </source>
</evidence>
<dbReference type="EC" id="2.7.8.26" evidence="1"/>
<dbReference type="EMBL" id="CP000949">
    <property type="protein sequence ID" value="ACA71745.1"/>
    <property type="molecule type" value="Genomic_DNA"/>
</dbReference>
<dbReference type="STRING" id="390235.PputW619_1240"/>
<dbReference type="KEGG" id="ppw:PputW619_1240"/>
<dbReference type="eggNOG" id="COG0368">
    <property type="taxonomic scope" value="Bacteria"/>
</dbReference>
<dbReference type="HOGENOM" id="CLU_057426_3_1_6"/>
<dbReference type="OrthoDB" id="9794626at2"/>
<dbReference type="UniPathway" id="UPA00148">
    <property type="reaction ID" value="UER00238"/>
</dbReference>
<dbReference type="GO" id="GO:0005886">
    <property type="term" value="C:plasma membrane"/>
    <property type="evidence" value="ECO:0007669"/>
    <property type="project" value="UniProtKB-SubCell"/>
</dbReference>
<dbReference type="GO" id="GO:0051073">
    <property type="term" value="F:adenosylcobinamide-GDP ribazoletransferase activity"/>
    <property type="evidence" value="ECO:0007669"/>
    <property type="project" value="UniProtKB-UniRule"/>
</dbReference>
<dbReference type="GO" id="GO:0008818">
    <property type="term" value="F:cobalamin 5'-phosphate synthase activity"/>
    <property type="evidence" value="ECO:0007669"/>
    <property type="project" value="UniProtKB-UniRule"/>
</dbReference>
<dbReference type="GO" id="GO:0009236">
    <property type="term" value="P:cobalamin biosynthetic process"/>
    <property type="evidence" value="ECO:0007669"/>
    <property type="project" value="UniProtKB-UniRule"/>
</dbReference>
<dbReference type="HAMAP" id="MF_00719">
    <property type="entry name" value="CobS"/>
    <property type="match status" value="1"/>
</dbReference>
<dbReference type="InterPro" id="IPR003805">
    <property type="entry name" value="CobS"/>
</dbReference>
<dbReference type="NCBIfam" id="TIGR00317">
    <property type="entry name" value="cobS"/>
    <property type="match status" value="1"/>
</dbReference>
<dbReference type="NCBIfam" id="NF001278">
    <property type="entry name" value="PRK00235.1-5"/>
    <property type="match status" value="1"/>
</dbReference>
<dbReference type="PANTHER" id="PTHR34148">
    <property type="entry name" value="ADENOSYLCOBINAMIDE-GDP RIBAZOLETRANSFERASE"/>
    <property type="match status" value="1"/>
</dbReference>
<dbReference type="PANTHER" id="PTHR34148:SF1">
    <property type="entry name" value="ADENOSYLCOBINAMIDE-GDP RIBAZOLETRANSFERASE"/>
    <property type="match status" value="1"/>
</dbReference>
<dbReference type="Pfam" id="PF02654">
    <property type="entry name" value="CobS"/>
    <property type="match status" value="1"/>
</dbReference>